<comment type="function">
    <text evidence="1">Part of a membrane-bound tetrathionate reductase that catalyzes the reduction of tetrathionate to thiosulfate. TtrC probably anchors TtrA and TtrB to the external face of the cytoplasmic membrane. May transfer electrons from membrane quinol to TtrB (By similarity).</text>
</comment>
<comment type="subunit">
    <text evidence="1">Probably composed of three subunits: TtrA, TtrB and TtrC.</text>
</comment>
<comment type="subcellular location">
    <subcellularLocation>
        <location evidence="3">Cell membrane</location>
        <topology evidence="3">Multi-pass membrane protein</topology>
    </subcellularLocation>
</comment>
<comment type="similarity">
    <text evidence="3">Belongs to the NrfD family.</text>
</comment>
<proteinExistence type="inferred from homology"/>
<gene>
    <name type="primary">ttrC</name>
    <name type="ordered locus">AF_0158</name>
</gene>
<accession>O30079</accession>
<evidence type="ECO:0000250" key="1"/>
<evidence type="ECO:0000255" key="2"/>
<evidence type="ECO:0000305" key="3"/>
<dbReference type="EMBL" id="AE000782">
    <property type="protein sequence ID" value="AAB91076.1"/>
    <property type="molecule type" value="Genomic_DNA"/>
</dbReference>
<dbReference type="PIR" id="F69269">
    <property type="entry name" value="F69269"/>
</dbReference>
<dbReference type="RefSeq" id="WP_010877670.1">
    <property type="nucleotide sequence ID" value="NC_000917.1"/>
</dbReference>
<dbReference type="STRING" id="224325.AF_0158"/>
<dbReference type="PaxDb" id="224325-AF_0158"/>
<dbReference type="EnsemblBacteria" id="AAB91076">
    <property type="protein sequence ID" value="AAB91076"/>
    <property type="gene ID" value="AF_0158"/>
</dbReference>
<dbReference type="KEGG" id="afu:AF_0158"/>
<dbReference type="eggNOG" id="arCOG02024">
    <property type="taxonomic scope" value="Archaea"/>
</dbReference>
<dbReference type="HOGENOM" id="CLU_751463_0_0_2"/>
<dbReference type="OrthoDB" id="28443at2157"/>
<dbReference type="Proteomes" id="UP000002199">
    <property type="component" value="Chromosome"/>
</dbReference>
<dbReference type="GO" id="GO:0005886">
    <property type="term" value="C:plasma membrane"/>
    <property type="evidence" value="ECO:0007669"/>
    <property type="project" value="UniProtKB-SubCell"/>
</dbReference>
<organism>
    <name type="scientific">Archaeoglobus fulgidus (strain ATCC 49558 / DSM 4304 / JCM 9628 / NBRC 100126 / VC-16)</name>
    <dbReference type="NCBI Taxonomy" id="224325"/>
    <lineage>
        <taxon>Archaea</taxon>
        <taxon>Methanobacteriati</taxon>
        <taxon>Methanobacteriota</taxon>
        <taxon>Archaeoglobi</taxon>
        <taxon>Archaeoglobales</taxon>
        <taxon>Archaeoglobaceae</taxon>
        <taxon>Archaeoglobus</taxon>
    </lineage>
</organism>
<protein>
    <recommendedName>
        <fullName>Tetrathionate reductase subunit C</fullName>
    </recommendedName>
</protein>
<keyword id="KW-1003">Cell membrane</keyword>
<keyword id="KW-0472">Membrane</keyword>
<keyword id="KW-1185">Reference proteome</keyword>
<keyword id="KW-0812">Transmembrane</keyword>
<keyword id="KW-1133">Transmembrane helix</keyword>
<sequence>MLWSYPEGFAYFNEFAQSIIWEPVAFSYALLISGADLLLLAALALLSGYLRRAIPMFLILGLSFFSVILLGPLADLALPHRATEILTRPHLASTEMHPGISVMALYGGLLWPLTFIVALIFALLYFSYPMHKKGGTFSFLSFGVKSEESYERLKPAMKVLAAILVPLSALWTIYPGMLFFSQTWIYAWKNWGLMLPMFFGETFITATGTALILYYLERMEDERIRYPLLQIHGAAAIALAGVLILQMFIWGMWGNPNFAAVVPMMQAAAVIFLLTFILTLVSAKYEAITPIVPVLALFGVVVNKWNLIINGQLISRAGMGVLEPELAPNWLAEAVSPIALAILLLVILSYIFPMEVEEDAA</sequence>
<feature type="chain" id="PRO_0000417419" description="Tetrathionate reductase subunit C">
    <location>
        <begin position="1"/>
        <end position="361"/>
    </location>
</feature>
<feature type="transmembrane region" description="Helical" evidence="2">
    <location>
        <begin position="26"/>
        <end position="46"/>
    </location>
</feature>
<feature type="transmembrane region" description="Helical" evidence="2">
    <location>
        <begin position="53"/>
        <end position="73"/>
    </location>
</feature>
<feature type="transmembrane region" description="Helical" evidence="2">
    <location>
        <begin position="104"/>
        <end position="124"/>
    </location>
</feature>
<feature type="transmembrane region" description="Helical" evidence="2">
    <location>
        <begin position="160"/>
        <end position="180"/>
    </location>
</feature>
<feature type="transmembrane region" description="Helical" evidence="2">
    <location>
        <begin position="193"/>
        <end position="213"/>
    </location>
</feature>
<feature type="transmembrane region" description="Helical" evidence="2">
    <location>
        <begin position="233"/>
        <end position="253"/>
    </location>
</feature>
<feature type="transmembrane region" description="Helical" evidence="2">
    <location>
        <begin position="258"/>
        <end position="278"/>
    </location>
</feature>
<feature type="transmembrane region" description="Helical" evidence="2">
    <location>
        <begin position="288"/>
        <end position="308"/>
    </location>
</feature>
<feature type="transmembrane region" description="Helical" evidence="2">
    <location>
        <begin position="334"/>
        <end position="354"/>
    </location>
</feature>
<reference key="1">
    <citation type="journal article" date="1997" name="Nature">
        <title>The complete genome sequence of the hyperthermophilic, sulphate-reducing archaeon Archaeoglobus fulgidus.</title>
        <authorList>
            <person name="Klenk H.-P."/>
            <person name="Clayton R.A."/>
            <person name="Tomb J.-F."/>
            <person name="White O."/>
            <person name="Nelson K.E."/>
            <person name="Ketchum K.A."/>
            <person name="Dodson R.J."/>
            <person name="Gwinn M.L."/>
            <person name="Hickey E.K."/>
            <person name="Peterson J.D."/>
            <person name="Richardson D.L."/>
            <person name="Kerlavage A.R."/>
            <person name="Graham D.E."/>
            <person name="Kyrpides N.C."/>
            <person name="Fleischmann R.D."/>
            <person name="Quackenbush J."/>
            <person name="Lee N.H."/>
            <person name="Sutton G.G."/>
            <person name="Gill S.R."/>
            <person name="Kirkness E.F."/>
            <person name="Dougherty B.A."/>
            <person name="McKenney K."/>
            <person name="Adams M.D."/>
            <person name="Loftus B.J."/>
            <person name="Peterson S.N."/>
            <person name="Reich C.I."/>
            <person name="McNeil L.K."/>
            <person name="Badger J.H."/>
            <person name="Glodek A."/>
            <person name="Zhou L."/>
            <person name="Overbeek R."/>
            <person name="Gocayne J.D."/>
            <person name="Weidman J.F."/>
            <person name="McDonald L.A."/>
            <person name="Utterback T.R."/>
            <person name="Cotton M.D."/>
            <person name="Spriggs T."/>
            <person name="Artiach P."/>
            <person name="Kaine B.P."/>
            <person name="Sykes S.M."/>
            <person name="Sadow P.W."/>
            <person name="D'Andrea K.P."/>
            <person name="Bowman C."/>
            <person name="Fujii C."/>
            <person name="Garland S.A."/>
            <person name="Mason T.M."/>
            <person name="Olsen G.J."/>
            <person name="Fraser C.M."/>
            <person name="Smith H.O."/>
            <person name="Woese C.R."/>
            <person name="Venter J.C."/>
        </authorList>
    </citation>
    <scope>NUCLEOTIDE SEQUENCE [LARGE SCALE GENOMIC DNA]</scope>
    <source>
        <strain>ATCC 49558 / DSM 4304 / JCM 9628 / NBRC 100126 / VC-16</strain>
    </source>
</reference>
<reference key="2">
    <citation type="journal article" date="2012" name="Biochemistry">
        <title>Conserved signal peptide recognition systems across the prokaryotic domains.</title>
        <authorList>
            <person name="Coulthurst S.J."/>
            <person name="Dawson A."/>
            <person name="Hunter W.N."/>
            <person name="Sargent F."/>
        </authorList>
    </citation>
    <scope>GENE NAME</scope>
    <source>
        <strain>ATCC 49558 / DSM 4304 / JCM 9628 / NBRC 100126 / VC-16</strain>
    </source>
</reference>
<name>TTRC_ARCFU</name>